<sequence length="540" mass="58843">MTLNSLPVWPALQAHYEEIRDAHLRDWFAPANDRAPTRAERFTFEGGGLAADFSKNRLTDATLALLVRLAREAGVEARRDAMFAGETVNPTEGRAALHTALRANAPDAPFQAQVAAERAKMARFADAVRSGAWTGYTGKRIRHVVNIGIGGSDLGPKMVVHALHHVATPDIATHFVSNVDGADLARVLERIDPEETLAIIVSKTFTTLETMTNARSLRDWFVANGCPEGALAKHFVGVSANPAEVVKFGIAEANVFEMWDWVGGRYSLWSAVGLSIMIAIGPERFDELLAGARDMDEHFRTAPLERNLPVLQGLVGIWYRNFFGAQSYLVAPYSEALHYLPSYLQQLEMESNGKSARIDGAFVDYPTSAVTWGEPGTNGQHAFFQMLHQGPTLVPIDFIAVLTPEHPLASHHPKLLANCFAQSEALMLGRTLDEARKIAGPAKPELAPHLTFPGNRPTTTLLVDALTPRTLGALIALYEHKVLVQAAVWNINPFDQWGVELGKILGKVVEADLTAAQVDPAKHDSSTSALIARARKALGE</sequence>
<reference key="1">
    <citation type="journal article" date="2004" name="Proc. Natl. Acad. Sci. U.S.A.">
        <title>Structural flexibility in the Burkholderia mallei genome.</title>
        <authorList>
            <person name="Nierman W.C."/>
            <person name="DeShazer D."/>
            <person name="Kim H.S."/>
            <person name="Tettelin H."/>
            <person name="Nelson K.E."/>
            <person name="Feldblyum T.V."/>
            <person name="Ulrich R.L."/>
            <person name="Ronning C.M."/>
            <person name="Brinkac L.M."/>
            <person name="Daugherty S.C."/>
            <person name="Davidsen T.D."/>
            <person name="DeBoy R.T."/>
            <person name="Dimitrov G."/>
            <person name="Dodson R.J."/>
            <person name="Durkin A.S."/>
            <person name="Gwinn M.L."/>
            <person name="Haft D.H."/>
            <person name="Khouri H.M."/>
            <person name="Kolonay J.F."/>
            <person name="Madupu R."/>
            <person name="Mohammoud Y."/>
            <person name="Nelson W.C."/>
            <person name="Radune D."/>
            <person name="Romero C.M."/>
            <person name="Sarria S."/>
            <person name="Selengut J."/>
            <person name="Shamblin C."/>
            <person name="Sullivan S.A."/>
            <person name="White O."/>
            <person name="Yu Y."/>
            <person name="Zafar N."/>
            <person name="Zhou L."/>
            <person name="Fraser C.M."/>
        </authorList>
    </citation>
    <scope>NUCLEOTIDE SEQUENCE [LARGE SCALE GENOMIC DNA]</scope>
    <source>
        <strain>ATCC 23344</strain>
    </source>
</reference>
<keyword id="KW-0963">Cytoplasm</keyword>
<keyword id="KW-0312">Gluconeogenesis</keyword>
<keyword id="KW-0324">Glycolysis</keyword>
<keyword id="KW-0413">Isomerase</keyword>
<keyword id="KW-1185">Reference proteome</keyword>
<comment type="function">
    <text evidence="1">Catalyzes the reversible isomerization of glucose-6-phosphate to fructose-6-phosphate.</text>
</comment>
<comment type="catalytic activity">
    <reaction evidence="1">
        <text>alpha-D-glucose 6-phosphate = beta-D-fructose 6-phosphate</text>
        <dbReference type="Rhea" id="RHEA:11816"/>
        <dbReference type="ChEBI" id="CHEBI:57634"/>
        <dbReference type="ChEBI" id="CHEBI:58225"/>
        <dbReference type="EC" id="5.3.1.9"/>
    </reaction>
</comment>
<comment type="pathway">
    <text evidence="1">Carbohydrate biosynthesis; gluconeogenesis.</text>
</comment>
<comment type="pathway">
    <text evidence="1">Carbohydrate degradation; glycolysis; D-glyceraldehyde 3-phosphate and glycerone phosphate from D-glucose: step 2/4.</text>
</comment>
<comment type="subcellular location">
    <subcellularLocation>
        <location evidence="1">Cytoplasm</location>
    </subcellularLocation>
</comment>
<comment type="similarity">
    <text evidence="1">Belongs to the GPI family.</text>
</comment>
<proteinExistence type="inferred from homology"/>
<accession>Q62JL8</accession>
<dbReference type="EC" id="5.3.1.9" evidence="1"/>
<dbReference type="EMBL" id="CP000010">
    <property type="protein sequence ID" value="AAU47672.1"/>
    <property type="molecule type" value="Genomic_DNA"/>
</dbReference>
<dbReference type="RefSeq" id="WP_004191382.1">
    <property type="nucleotide sequence ID" value="NC_006348.1"/>
</dbReference>
<dbReference type="RefSeq" id="YP_103101.1">
    <property type="nucleotide sequence ID" value="NC_006348.1"/>
</dbReference>
<dbReference type="SMR" id="Q62JL8"/>
<dbReference type="GeneID" id="93060581"/>
<dbReference type="KEGG" id="bma:BMA1449"/>
<dbReference type="PATRIC" id="fig|243160.12.peg.1492"/>
<dbReference type="eggNOG" id="COG0166">
    <property type="taxonomic scope" value="Bacteria"/>
</dbReference>
<dbReference type="HOGENOM" id="CLU_017947_3_1_4"/>
<dbReference type="UniPathway" id="UPA00109">
    <property type="reaction ID" value="UER00181"/>
</dbReference>
<dbReference type="UniPathway" id="UPA00138"/>
<dbReference type="Proteomes" id="UP000006693">
    <property type="component" value="Chromosome 1"/>
</dbReference>
<dbReference type="GO" id="GO:0005829">
    <property type="term" value="C:cytosol"/>
    <property type="evidence" value="ECO:0007669"/>
    <property type="project" value="TreeGrafter"/>
</dbReference>
<dbReference type="GO" id="GO:0097367">
    <property type="term" value="F:carbohydrate derivative binding"/>
    <property type="evidence" value="ECO:0007669"/>
    <property type="project" value="InterPro"/>
</dbReference>
<dbReference type="GO" id="GO:0004347">
    <property type="term" value="F:glucose-6-phosphate isomerase activity"/>
    <property type="evidence" value="ECO:0007669"/>
    <property type="project" value="UniProtKB-UniRule"/>
</dbReference>
<dbReference type="GO" id="GO:0048029">
    <property type="term" value="F:monosaccharide binding"/>
    <property type="evidence" value="ECO:0007669"/>
    <property type="project" value="TreeGrafter"/>
</dbReference>
<dbReference type="GO" id="GO:0006094">
    <property type="term" value="P:gluconeogenesis"/>
    <property type="evidence" value="ECO:0007669"/>
    <property type="project" value="UniProtKB-UniRule"/>
</dbReference>
<dbReference type="GO" id="GO:0051156">
    <property type="term" value="P:glucose 6-phosphate metabolic process"/>
    <property type="evidence" value="ECO:0007669"/>
    <property type="project" value="TreeGrafter"/>
</dbReference>
<dbReference type="GO" id="GO:0006096">
    <property type="term" value="P:glycolytic process"/>
    <property type="evidence" value="ECO:0007669"/>
    <property type="project" value="UniProtKB-UniRule"/>
</dbReference>
<dbReference type="CDD" id="cd05015">
    <property type="entry name" value="SIS_PGI_1"/>
    <property type="match status" value="1"/>
</dbReference>
<dbReference type="CDD" id="cd05016">
    <property type="entry name" value="SIS_PGI_2"/>
    <property type="match status" value="1"/>
</dbReference>
<dbReference type="Gene3D" id="1.10.1390.10">
    <property type="match status" value="1"/>
</dbReference>
<dbReference type="Gene3D" id="3.40.50.10490">
    <property type="entry name" value="Glucose-6-phosphate isomerase like protein, domain 1"/>
    <property type="match status" value="2"/>
</dbReference>
<dbReference type="HAMAP" id="MF_00473">
    <property type="entry name" value="G6P_isomerase"/>
    <property type="match status" value="1"/>
</dbReference>
<dbReference type="InterPro" id="IPR001672">
    <property type="entry name" value="G6P_Isomerase"/>
</dbReference>
<dbReference type="InterPro" id="IPR023096">
    <property type="entry name" value="G6P_Isomerase_C"/>
</dbReference>
<dbReference type="InterPro" id="IPR018189">
    <property type="entry name" value="Phosphoglucose_isomerase_CS"/>
</dbReference>
<dbReference type="InterPro" id="IPR046348">
    <property type="entry name" value="SIS_dom_sf"/>
</dbReference>
<dbReference type="InterPro" id="IPR035476">
    <property type="entry name" value="SIS_PGI_1"/>
</dbReference>
<dbReference type="InterPro" id="IPR035482">
    <property type="entry name" value="SIS_PGI_2"/>
</dbReference>
<dbReference type="NCBIfam" id="NF001211">
    <property type="entry name" value="PRK00179.1"/>
    <property type="match status" value="1"/>
</dbReference>
<dbReference type="PANTHER" id="PTHR11469">
    <property type="entry name" value="GLUCOSE-6-PHOSPHATE ISOMERASE"/>
    <property type="match status" value="1"/>
</dbReference>
<dbReference type="PANTHER" id="PTHR11469:SF1">
    <property type="entry name" value="GLUCOSE-6-PHOSPHATE ISOMERASE"/>
    <property type="match status" value="1"/>
</dbReference>
<dbReference type="Pfam" id="PF00342">
    <property type="entry name" value="PGI"/>
    <property type="match status" value="1"/>
</dbReference>
<dbReference type="PRINTS" id="PR00662">
    <property type="entry name" value="G6PISOMERASE"/>
</dbReference>
<dbReference type="SUPFAM" id="SSF53697">
    <property type="entry name" value="SIS domain"/>
    <property type="match status" value="1"/>
</dbReference>
<dbReference type="PROSITE" id="PS00765">
    <property type="entry name" value="P_GLUCOSE_ISOMERASE_1"/>
    <property type="match status" value="1"/>
</dbReference>
<dbReference type="PROSITE" id="PS00174">
    <property type="entry name" value="P_GLUCOSE_ISOMERASE_2"/>
    <property type="match status" value="1"/>
</dbReference>
<dbReference type="PROSITE" id="PS51463">
    <property type="entry name" value="P_GLUCOSE_ISOMERASE_3"/>
    <property type="match status" value="1"/>
</dbReference>
<name>G6PI_BURMA</name>
<organism>
    <name type="scientific">Burkholderia mallei (strain ATCC 23344)</name>
    <dbReference type="NCBI Taxonomy" id="243160"/>
    <lineage>
        <taxon>Bacteria</taxon>
        <taxon>Pseudomonadati</taxon>
        <taxon>Pseudomonadota</taxon>
        <taxon>Betaproteobacteria</taxon>
        <taxon>Burkholderiales</taxon>
        <taxon>Burkholderiaceae</taxon>
        <taxon>Burkholderia</taxon>
        <taxon>pseudomallei group</taxon>
    </lineage>
</organism>
<protein>
    <recommendedName>
        <fullName evidence="1">Glucose-6-phosphate isomerase</fullName>
        <shortName evidence="1">GPI</shortName>
        <ecNumber evidence="1">5.3.1.9</ecNumber>
    </recommendedName>
    <alternativeName>
        <fullName evidence="1">Phosphoglucose isomerase</fullName>
        <shortName evidence="1">PGI</shortName>
    </alternativeName>
    <alternativeName>
        <fullName evidence="1">Phosphohexose isomerase</fullName>
        <shortName evidence="1">PHI</shortName>
    </alternativeName>
</protein>
<gene>
    <name evidence="1" type="primary">pgi</name>
    <name type="ordered locus">BMA1449</name>
</gene>
<evidence type="ECO:0000255" key="1">
    <source>
        <dbReference type="HAMAP-Rule" id="MF_00473"/>
    </source>
</evidence>
<feature type="chain" id="PRO_0000180614" description="Glucose-6-phosphate isomerase">
    <location>
        <begin position="1"/>
        <end position="540"/>
    </location>
</feature>
<feature type="active site" description="Proton donor" evidence="1">
    <location>
        <position position="350"/>
    </location>
</feature>
<feature type="active site" evidence="1">
    <location>
        <position position="381"/>
    </location>
</feature>
<feature type="active site" evidence="1">
    <location>
        <position position="503"/>
    </location>
</feature>